<evidence type="ECO:0000255" key="1">
    <source>
        <dbReference type="HAMAP-Rule" id="MF_01334"/>
    </source>
</evidence>
<evidence type="ECO:0000256" key="2">
    <source>
        <dbReference type="SAM" id="MobiDB-lite"/>
    </source>
</evidence>
<evidence type="ECO:0000305" key="3"/>
<accession>P66122</accession>
<accession>A0A1R3XZ79</accession>
<accession>P96385</accession>
<accession>X2BGQ7</accession>
<sequence>MAKSASNQLRVTVRTETGKGASRRARRAGKIPAVLYGHGAEPQHLELPGHDYAAVLRHSGTNAVLTLDIAGKEQLALTKALHIHPIRRTIQHADLLVVRRGEKVVVEVSVVVEGQAGPDTLVTQETNSIEIEAEALSIPEQLTVSIEGAEPGTQLTAGQIALPAGVSLISDPDLLVVNVVKAPTAEELEGEVAGAEEAEEAAVEAGEAEAAGESE</sequence>
<gene>
    <name evidence="1" type="primary">rplY</name>
    <name evidence="1" type="synonym">ctc</name>
    <name type="ordered locus">BQ2027_MB1043C</name>
</gene>
<comment type="function">
    <text evidence="1">This is one of the proteins that binds to the 5S RNA in the ribosome where it forms part of the central protuberance.</text>
</comment>
<comment type="subunit">
    <text evidence="1">Part of the 50S ribosomal subunit; part of the 5S rRNA/L5/L18/L25 subcomplex. Contacts the 5S rRNA. Binds to the 5S rRNA independently of L5 and L18.</text>
</comment>
<comment type="similarity">
    <text evidence="1">Belongs to the bacterial ribosomal protein bL25 family. CTC subfamily.</text>
</comment>
<organism>
    <name type="scientific">Mycobacterium bovis (strain ATCC BAA-935 / AF2122/97)</name>
    <dbReference type="NCBI Taxonomy" id="233413"/>
    <lineage>
        <taxon>Bacteria</taxon>
        <taxon>Bacillati</taxon>
        <taxon>Actinomycetota</taxon>
        <taxon>Actinomycetes</taxon>
        <taxon>Mycobacteriales</taxon>
        <taxon>Mycobacteriaceae</taxon>
        <taxon>Mycobacterium</taxon>
        <taxon>Mycobacterium tuberculosis complex</taxon>
    </lineage>
</organism>
<protein>
    <recommendedName>
        <fullName evidence="1">Large ribosomal subunit protein bL25</fullName>
    </recommendedName>
    <alternativeName>
        <fullName evidence="3">50S ribosomal protein L25</fullName>
    </alternativeName>
    <alternativeName>
        <fullName evidence="1">General stress protein CTC</fullName>
    </alternativeName>
</protein>
<name>RL25_MYCBO</name>
<reference key="1">
    <citation type="journal article" date="2003" name="Proc. Natl. Acad. Sci. U.S.A.">
        <title>The complete genome sequence of Mycobacterium bovis.</title>
        <authorList>
            <person name="Garnier T."/>
            <person name="Eiglmeier K."/>
            <person name="Camus J.-C."/>
            <person name="Medina N."/>
            <person name="Mansoor H."/>
            <person name="Pryor M."/>
            <person name="Duthoy S."/>
            <person name="Grondin S."/>
            <person name="Lacroix C."/>
            <person name="Monsempe C."/>
            <person name="Simon S."/>
            <person name="Harris B."/>
            <person name="Atkin R."/>
            <person name="Doggett J."/>
            <person name="Mayes R."/>
            <person name="Keating L."/>
            <person name="Wheeler P.R."/>
            <person name="Parkhill J."/>
            <person name="Barrell B.G."/>
            <person name="Cole S.T."/>
            <person name="Gordon S.V."/>
            <person name="Hewinson R.G."/>
        </authorList>
    </citation>
    <scope>NUCLEOTIDE SEQUENCE [LARGE SCALE GENOMIC DNA]</scope>
    <source>
        <strain>ATCC BAA-935 / AF2122/97</strain>
    </source>
</reference>
<reference key="2">
    <citation type="journal article" date="2017" name="Genome Announc.">
        <title>Updated reference genome sequence and annotation of Mycobacterium bovis AF2122/97.</title>
        <authorList>
            <person name="Malone K.M."/>
            <person name="Farrell D."/>
            <person name="Stuber T.P."/>
            <person name="Schubert O.T."/>
            <person name="Aebersold R."/>
            <person name="Robbe-Austerman S."/>
            <person name="Gordon S.V."/>
        </authorList>
    </citation>
    <scope>NUCLEOTIDE SEQUENCE [LARGE SCALE GENOMIC DNA]</scope>
    <scope>GENOME REANNOTATION</scope>
    <source>
        <strain>ATCC BAA-935 / AF2122/97</strain>
    </source>
</reference>
<proteinExistence type="inferred from homology"/>
<keyword id="KW-1185">Reference proteome</keyword>
<keyword id="KW-0687">Ribonucleoprotein</keyword>
<keyword id="KW-0689">Ribosomal protein</keyword>
<keyword id="KW-0694">RNA-binding</keyword>
<keyword id="KW-0699">rRNA-binding</keyword>
<dbReference type="EMBL" id="LT708304">
    <property type="protein sequence ID" value="SIT99642.1"/>
    <property type="molecule type" value="Genomic_DNA"/>
</dbReference>
<dbReference type="RefSeq" id="NP_854699.1">
    <property type="nucleotide sequence ID" value="NC_002945.3"/>
</dbReference>
<dbReference type="RefSeq" id="WP_003405254.1">
    <property type="nucleotide sequence ID" value="NC_002945.4"/>
</dbReference>
<dbReference type="SMR" id="P66122"/>
<dbReference type="KEGG" id="mbo:BQ2027_MB1043C"/>
<dbReference type="PATRIC" id="fig|233413.5.peg.1133"/>
<dbReference type="Proteomes" id="UP000001419">
    <property type="component" value="Chromosome"/>
</dbReference>
<dbReference type="GO" id="GO:0022625">
    <property type="term" value="C:cytosolic large ribosomal subunit"/>
    <property type="evidence" value="ECO:0007669"/>
    <property type="project" value="TreeGrafter"/>
</dbReference>
<dbReference type="GO" id="GO:0008097">
    <property type="term" value="F:5S rRNA binding"/>
    <property type="evidence" value="ECO:0007669"/>
    <property type="project" value="InterPro"/>
</dbReference>
<dbReference type="GO" id="GO:0003735">
    <property type="term" value="F:structural constituent of ribosome"/>
    <property type="evidence" value="ECO:0007669"/>
    <property type="project" value="InterPro"/>
</dbReference>
<dbReference type="GO" id="GO:0006412">
    <property type="term" value="P:translation"/>
    <property type="evidence" value="ECO:0007669"/>
    <property type="project" value="UniProtKB-UniRule"/>
</dbReference>
<dbReference type="CDD" id="cd00495">
    <property type="entry name" value="Ribosomal_L25_TL5_CTC"/>
    <property type="match status" value="1"/>
</dbReference>
<dbReference type="FunFam" id="2.170.120.20:FF:000010">
    <property type="entry name" value="50S ribosomal protein L25"/>
    <property type="match status" value="1"/>
</dbReference>
<dbReference type="FunFam" id="2.40.240.10:FF:000010">
    <property type="entry name" value="50S ribosomal protein L25"/>
    <property type="match status" value="1"/>
</dbReference>
<dbReference type="Gene3D" id="2.170.120.20">
    <property type="entry name" value="Ribosomal protein L25, beta domain"/>
    <property type="match status" value="1"/>
</dbReference>
<dbReference type="Gene3D" id="2.40.240.10">
    <property type="entry name" value="Ribosomal Protein L25, Chain P"/>
    <property type="match status" value="1"/>
</dbReference>
<dbReference type="HAMAP" id="MF_01334">
    <property type="entry name" value="Ribosomal_bL25_CTC"/>
    <property type="match status" value="1"/>
</dbReference>
<dbReference type="InterPro" id="IPR020056">
    <property type="entry name" value="Rbsml_bL25/Gln-tRNA_synth_N"/>
</dbReference>
<dbReference type="InterPro" id="IPR011035">
    <property type="entry name" value="Ribosomal_bL25/Gln-tRNA_synth"/>
</dbReference>
<dbReference type="InterPro" id="IPR020057">
    <property type="entry name" value="Ribosomal_bL25_b-dom"/>
</dbReference>
<dbReference type="InterPro" id="IPR037121">
    <property type="entry name" value="Ribosomal_bL25_C"/>
</dbReference>
<dbReference type="InterPro" id="IPR001021">
    <property type="entry name" value="Ribosomal_bL25_long"/>
</dbReference>
<dbReference type="InterPro" id="IPR029751">
    <property type="entry name" value="Ribosomal_L25_dom"/>
</dbReference>
<dbReference type="InterPro" id="IPR020930">
    <property type="entry name" value="Ribosomal_uL5_bac-type"/>
</dbReference>
<dbReference type="NCBIfam" id="TIGR00731">
    <property type="entry name" value="bL25_bact_ctc"/>
    <property type="match status" value="1"/>
</dbReference>
<dbReference type="NCBIfam" id="NF004131">
    <property type="entry name" value="PRK05618.2-1"/>
    <property type="match status" value="1"/>
</dbReference>
<dbReference type="PANTHER" id="PTHR33284">
    <property type="entry name" value="RIBOSOMAL PROTEIN L25/GLN-TRNA SYNTHETASE, ANTI-CODON-BINDING DOMAIN-CONTAINING PROTEIN"/>
    <property type="match status" value="1"/>
</dbReference>
<dbReference type="PANTHER" id="PTHR33284:SF1">
    <property type="entry name" value="RIBOSOMAL PROTEIN L25_GLN-TRNA SYNTHETASE, ANTI-CODON-BINDING DOMAIN-CONTAINING PROTEIN"/>
    <property type="match status" value="1"/>
</dbReference>
<dbReference type="Pfam" id="PF01386">
    <property type="entry name" value="Ribosomal_L25p"/>
    <property type="match status" value="1"/>
</dbReference>
<dbReference type="Pfam" id="PF14693">
    <property type="entry name" value="Ribosomal_TL5_C"/>
    <property type="match status" value="1"/>
</dbReference>
<dbReference type="SUPFAM" id="SSF50715">
    <property type="entry name" value="Ribosomal protein L25-like"/>
    <property type="match status" value="1"/>
</dbReference>
<feature type="chain" id="PRO_0000181567" description="Large ribosomal subunit protein bL25">
    <location>
        <begin position="1"/>
        <end position="215"/>
    </location>
</feature>
<feature type="region of interest" description="Disordered" evidence="2">
    <location>
        <begin position="1"/>
        <end position="25"/>
    </location>
</feature>
<feature type="region of interest" description="Disordered" evidence="2">
    <location>
        <begin position="187"/>
        <end position="215"/>
    </location>
</feature>
<feature type="compositionally biased region" description="Polar residues" evidence="2">
    <location>
        <begin position="1"/>
        <end position="10"/>
    </location>
</feature>